<name>ARGC_ACET2</name>
<keyword id="KW-0028">Amino-acid biosynthesis</keyword>
<keyword id="KW-0055">Arginine biosynthesis</keyword>
<keyword id="KW-0963">Cytoplasm</keyword>
<keyword id="KW-0521">NADP</keyword>
<keyword id="KW-0560">Oxidoreductase</keyword>
<keyword id="KW-1185">Reference proteome</keyword>
<evidence type="ECO:0000255" key="1">
    <source>
        <dbReference type="HAMAP-Rule" id="MF_00150"/>
    </source>
</evidence>
<protein>
    <recommendedName>
        <fullName evidence="1">N-acetyl-gamma-glutamyl-phosphate reductase</fullName>
        <shortName evidence="1">AGPR</shortName>
        <ecNumber evidence="1">1.2.1.38</ecNumber>
    </recommendedName>
    <alternativeName>
        <fullName evidence="1">N-acetyl-glutamate semialdehyde dehydrogenase</fullName>
        <shortName evidence="1">NAGSA dehydrogenase</shortName>
    </alternativeName>
</protein>
<sequence>MASVGIIGATGYVGTEIVRLLQNHPDINITSVVSHNFAGQKISDIYPNLKNVFEMECDELDIDKIADKAEVFVTALPHGISKEVIPKLVEKGKRIVDHSGDFRYKSVEVYEKWYNATHGMPHLLKLSAYGLPELHREEIKNAQIIGNPGCYPTCSILALAPLVKNRLVDTKNIIIDAASGVSGAGRKTDLPYQFCECDENFKAYSVSNHRHTSEIEQELSLLAEEEITVSFTPHLVPMKRGMLATIYANLNCEKSTSELIELYKEYYKNEYFVRILDEGKLPETKFVAGSNFIDIGLVVDKRLNRVVILSAIDNLGKGAAGQAVQVLNILFGLPEHRGLTNPGFYL</sequence>
<organism>
    <name type="scientific">Acetivibrio thermocellus (strain ATCC 27405 / DSM 1237 / JCM 9322 / NBRC 103400 / NCIMB 10682 / NRRL B-4536 / VPI 7372)</name>
    <name type="common">Clostridium thermocellum</name>
    <dbReference type="NCBI Taxonomy" id="203119"/>
    <lineage>
        <taxon>Bacteria</taxon>
        <taxon>Bacillati</taxon>
        <taxon>Bacillota</taxon>
        <taxon>Clostridia</taxon>
        <taxon>Eubacteriales</taxon>
        <taxon>Oscillospiraceae</taxon>
        <taxon>Acetivibrio</taxon>
    </lineage>
</organism>
<dbReference type="EC" id="1.2.1.38" evidence="1"/>
<dbReference type="EMBL" id="CP000568">
    <property type="protein sequence ID" value="ABN53084.1"/>
    <property type="molecule type" value="Genomic_DNA"/>
</dbReference>
<dbReference type="RefSeq" id="WP_003513821.1">
    <property type="nucleotide sequence ID" value="NC_009012.1"/>
</dbReference>
<dbReference type="SMR" id="A3DGK5"/>
<dbReference type="STRING" id="203119.Cthe_1863"/>
<dbReference type="GeneID" id="35804959"/>
<dbReference type="KEGG" id="cth:Cthe_1863"/>
<dbReference type="eggNOG" id="COG0002">
    <property type="taxonomic scope" value="Bacteria"/>
</dbReference>
<dbReference type="HOGENOM" id="CLU_006384_0_1_9"/>
<dbReference type="OrthoDB" id="9801289at2"/>
<dbReference type="UniPathway" id="UPA00068">
    <property type="reaction ID" value="UER00108"/>
</dbReference>
<dbReference type="Proteomes" id="UP000002145">
    <property type="component" value="Chromosome"/>
</dbReference>
<dbReference type="GO" id="GO:0005737">
    <property type="term" value="C:cytoplasm"/>
    <property type="evidence" value="ECO:0007669"/>
    <property type="project" value="UniProtKB-SubCell"/>
</dbReference>
<dbReference type="GO" id="GO:0003942">
    <property type="term" value="F:N-acetyl-gamma-glutamyl-phosphate reductase activity"/>
    <property type="evidence" value="ECO:0007669"/>
    <property type="project" value="UniProtKB-UniRule"/>
</dbReference>
<dbReference type="GO" id="GO:0051287">
    <property type="term" value="F:NAD binding"/>
    <property type="evidence" value="ECO:0007669"/>
    <property type="project" value="InterPro"/>
</dbReference>
<dbReference type="GO" id="GO:0070401">
    <property type="term" value="F:NADP+ binding"/>
    <property type="evidence" value="ECO:0007669"/>
    <property type="project" value="InterPro"/>
</dbReference>
<dbReference type="GO" id="GO:0006526">
    <property type="term" value="P:L-arginine biosynthetic process"/>
    <property type="evidence" value="ECO:0007669"/>
    <property type="project" value="UniProtKB-UniRule"/>
</dbReference>
<dbReference type="CDD" id="cd23934">
    <property type="entry name" value="AGPR_1_C"/>
    <property type="match status" value="1"/>
</dbReference>
<dbReference type="CDD" id="cd17895">
    <property type="entry name" value="AGPR_1_N"/>
    <property type="match status" value="1"/>
</dbReference>
<dbReference type="FunFam" id="3.30.360.10:FF:000014">
    <property type="entry name" value="N-acetyl-gamma-glutamyl-phosphate reductase"/>
    <property type="match status" value="1"/>
</dbReference>
<dbReference type="Gene3D" id="3.30.360.10">
    <property type="entry name" value="Dihydrodipicolinate Reductase, domain 2"/>
    <property type="match status" value="1"/>
</dbReference>
<dbReference type="Gene3D" id="3.40.50.720">
    <property type="entry name" value="NAD(P)-binding Rossmann-like Domain"/>
    <property type="match status" value="1"/>
</dbReference>
<dbReference type="HAMAP" id="MF_00150">
    <property type="entry name" value="ArgC_type1"/>
    <property type="match status" value="1"/>
</dbReference>
<dbReference type="InterPro" id="IPR023013">
    <property type="entry name" value="AGPR_AS"/>
</dbReference>
<dbReference type="InterPro" id="IPR000706">
    <property type="entry name" value="AGPR_type-1"/>
</dbReference>
<dbReference type="InterPro" id="IPR036291">
    <property type="entry name" value="NAD(P)-bd_dom_sf"/>
</dbReference>
<dbReference type="InterPro" id="IPR050085">
    <property type="entry name" value="NAGSA_dehydrogenase"/>
</dbReference>
<dbReference type="InterPro" id="IPR000534">
    <property type="entry name" value="Semialdehyde_DH_NAD-bd"/>
</dbReference>
<dbReference type="NCBIfam" id="TIGR01850">
    <property type="entry name" value="argC"/>
    <property type="match status" value="1"/>
</dbReference>
<dbReference type="PANTHER" id="PTHR32338:SF10">
    <property type="entry name" value="N-ACETYL-GAMMA-GLUTAMYL-PHOSPHATE REDUCTASE, CHLOROPLASTIC-RELATED"/>
    <property type="match status" value="1"/>
</dbReference>
<dbReference type="PANTHER" id="PTHR32338">
    <property type="entry name" value="N-ACETYL-GAMMA-GLUTAMYL-PHOSPHATE REDUCTASE, CHLOROPLASTIC-RELATED-RELATED"/>
    <property type="match status" value="1"/>
</dbReference>
<dbReference type="Pfam" id="PF01118">
    <property type="entry name" value="Semialdhyde_dh"/>
    <property type="match status" value="1"/>
</dbReference>
<dbReference type="Pfam" id="PF22698">
    <property type="entry name" value="Semialdhyde_dhC_1"/>
    <property type="match status" value="1"/>
</dbReference>
<dbReference type="SMART" id="SM00859">
    <property type="entry name" value="Semialdhyde_dh"/>
    <property type="match status" value="1"/>
</dbReference>
<dbReference type="SUPFAM" id="SSF55347">
    <property type="entry name" value="Glyceraldehyde-3-phosphate dehydrogenase-like, C-terminal domain"/>
    <property type="match status" value="1"/>
</dbReference>
<dbReference type="SUPFAM" id="SSF51735">
    <property type="entry name" value="NAD(P)-binding Rossmann-fold domains"/>
    <property type="match status" value="1"/>
</dbReference>
<dbReference type="PROSITE" id="PS01224">
    <property type="entry name" value="ARGC"/>
    <property type="match status" value="1"/>
</dbReference>
<reference key="1">
    <citation type="submission" date="2007-02" db="EMBL/GenBank/DDBJ databases">
        <title>Complete sequence of Clostridium thermocellum ATCC 27405.</title>
        <authorList>
            <consortium name="US DOE Joint Genome Institute"/>
            <person name="Copeland A."/>
            <person name="Lucas S."/>
            <person name="Lapidus A."/>
            <person name="Barry K."/>
            <person name="Detter J.C."/>
            <person name="Glavina del Rio T."/>
            <person name="Hammon N."/>
            <person name="Israni S."/>
            <person name="Dalin E."/>
            <person name="Tice H."/>
            <person name="Pitluck S."/>
            <person name="Chertkov O."/>
            <person name="Brettin T."/>
            <person name="Bruce D."/>
            <person name="Han C."/>
            <person name="Tapia R."/>
            <person name="Gilna P."/>
            <person name="Schmutz J."/>
            <person name="Larimer F."/>
            <person name="Land M."/>
            <person name="Hauser L."/>
            <person name="Kyrpides N."/>
            <person name="Mikhailova N."/>
            <person name="Wu J.H.D."/>
            <person name="Newcomb M."/>
            <person name="Richardson P."/>
        </authorList>
    </citation>
    <scope>NUCLEOTIDE SEQUENCE [LARGE SCALE GENOMIC DNA]</scope>
    <source>
        <strain>ATCC 27405 / DSM 1237 / JCM 9322 / NBRC 103400 / NCIMB 10682 / NRRL B-4536 / VPI 7372</strain>
    </source>
</reference>
<feature type="chain" id="PRO_1000010990" description="N-acetyl-gamma-glutamyl-phosphate reductase">
    <location>
        <begin position="1"/>
        <end position="346"/>
    </location>
</feature>
<feature type="active site" evidence="1">
    <location>
        <position position="150"/>
    </location>
</feature>
<gene>
    <name evidence="1" type="primary">argC</name>
    <name type="ordered locus">Cthe_1863</name>
</gene>
<proteinExistence type="inferred from homology"/>
<comment type="function">
    <text evidence="1">Catalyzes the NADPH-dependent reduction of N-acetyl-5-glutamyl phosphate to yield N-acetyl-L-glutamate 5-semialdehyde.</text>
</comment>
<comment type="catalytic activity">
    <reaction evidence="1">
        <text>N-acetyl-L-glutamate 5-semialdehyde + phosphate + NADP(+) = N-acetyl-L-glutamyl 5-phosphate + NADPH + H(+)</text>
        <dbReference type="Rhea" id="RHEA:21588"/>
        <dbReference type="ChEBI" id="CHEBI:15378"/>
        <dbReference type="ChEBI" id="CHEBI:29123"/>
        <dbReference type="ChEBI" id="CHEBI:43474"/>
        <dbReference type="ChEBI" id="CHEBI:57783"/>
        <dbReference type="ChEBI" id="CHEBI:57936"/>
        <dbReference type="ChEBI" id="CHEBI:58349"/>
        <dbReference type="EC" id="1.2.1.38"/>
    </reaction>
</comment>
<comment type="pathway">
    <text evidence="1">Amino-acid biosynthesis; L-arginine biosynthesis; N(2)-acetyl-L-ornithine from L-glutamate: step 3/4.</text>
</comment>
<comment type="subcellular location">
    <subcellularLocation>
        <location evidence="1">Cytoplasm</location>
    </subcellularLocation>
</comment>
<comment type="similarity">
    <text evidence="1">Belongs to the NAGSA dehydrogenase family. Type 1 subfamily.</text>
</comment>
<accession>A3DGK5</accession>